<proteinExistence type="evidence at protein level"/>
<accession>Q8T9B6</accession>
<accession>A1Z712</accession>
<name>MESD_DROME</name>
<feature type="signal peptide" evidence="2">
    <location>
        <begin position="1"/>
        <end position="18"/>
    </location>
</feature>
<feature type="chain" id="PRO_0000385021" description="LDLR chaperone boca">
    <location>
        <begin position="19"/>
        <end position="180"/>
    </location>
</feature>
<feature type="region of interest" description="Disordered" evidence="4">
    <location>
        <begin position="48"/>
        <end position="78"/>
    </location>
</feature>
<feature type="region of interest" description="Structured core" evidence="1">
    <location>
        <begin position="93"/>
        <end position="166"/>
    </location>
</feature>
<feature type="short sequence motif" description="Prevents secretion from ER">
    <location>
        <begin position="177"/>
        <end position="180"/>
    </location>
</feature>
<feature type="compositionally biased region" description="Acidic residues" evidence="4">
    <location>
        <begin position="48"/>
        <end position="61"/>
    </location>
</feature>
<feature type="mutagenesis site" description="In boca1; induces lethality." evidence="5">
    <original>W</original>
    <variation>R</variation>
    <location>
        <position position="49"/>
    </location>
</feature>
<feature type="sequence conflict" description="In Ref. 3; AAL39985." evidence="6" ref="3">
    <original>L</original>
    <variation>V</variation>
    <location>
        <position position="15"/>
    </location>
</feature>
<feature type="strand" evidence="7">
    <location>
        <begin position="94"/>
        <end position="103"/>
    </location>
</feature>
<feature type="helix" evidence="7">
    <location>
        <begin position="106"/>
        <end position="122"/>
    </location>
</feature>
<feature type="strand" evidence="7">
    <location>
        <begin position="127"/>
        <end position="133"/>
    </location>
</feature>
<feature type="strand" evidence="7">
    <location>
        <begin position="136"/>
        <end position="143"/>
    </location>
</feature>
<feature type="helix" evidence="7">
    <location>
        <begin position="144"/>
        <end position="146"/>
    </location>
</feature>
<feature type="helix" evidence="7">
    <location>
        <begin position="147"/>
        <end position="154"/>
    </location>
</feature>
<feature type="strand" evidence="7">
    <location>
        <begin position="160"/>
        <end position="165"/>
    </location>
</feature>
<feature type="strand" evidence="7">
    <location>
        <begin position="168"/>
        <end position="171"/>
    </location>
</feature>
<sequence length="180" mass="21002">MQTRLVLLLLALTPLVLAKKFKEEEKPAWAKKDIRDYSEADLERLLDQWEEDEEPLEDDELPEHLRPQPKLDLSNLDSKSPEDLLKVSKKGRTLMTFVSVTGNPTREESDTITKLWQTSLWNNHIQAERYMVDDNRAIFLFKDGTQAWDAKDFLIEQERCKGVTIENKEYPGVNAKKDEL</sequence>
<gene>
    <name type="primary">boca</name>
    <name type="ORF">CG30498</name>
</gene>
<organism>
    <name type="scientific">Drosophila melanogaster</name>
    <name type="common">Fruit fly</name>
    <dbReference type="NCBI Taxonomy" id="7227"/>
    <lineage>
        <taxon>Eukaryota</taxon>
        <taxon>Metazoa</taxon>
        <taxon>Ecdysozoa</taxon>
        <taxon>Arthropoda</taxon>
        <taxon>Hexapoda</taxon>
        <taxon>Insecta</taxon>
        <taxon>Pterygota</taxon>
        <taxon>Neoptera</taxon>
        <taxon>Endopterygota</taxon>
        <taxon>Diptera</taxon>
        <taxon>Brachycera</taxon>
        <taxon>Muscomorpha</taxon>
        <taxon>Ephydroidea</taxon>
        <taxon>Drosophilidae</taxon>
        <taxon>Drosophila</taxon>
        <taxon>Sophophora</taxon>
    </lineage>
</organism>
<evidence type="ECO:0000250" key="1"/>
<evidence type="ECO:0000255" key="2"/>
<evidence type="ECO:0000255" key="3">
    <source>
        <dbReference type="PROSITE-ProRule" id="PRU10138"/>
    </source>
</evidence>
<evidence type="ECO:0000256" key="4">
    <source>
        <dbReference type="SAM" id="MobiDB-lite"/>
    </source>
</evidence>
<evidence type="ECO:0000269" key="5">
    <source>
    </source>
</evidence>
<evidence type="ECO:0000305" key="6"/>
<evidence type="ECO:0007829" key="7">
    <source>
        <dbReference type="PDB" id="3OFF"/>
    </source>
</evidence>
<dbReference type="EMBL" id="AE013599">
    <property type="protein sequence ID" value="AAF59229.2"/>
    <property type="molecule type" value="Genomic_DNA"/>
</dbReference>
<dbReference type="EMBL" id="AY069840">
    <property type="protein sequence ID" value="AAL39985.1"/>
    <property type="molecule type" value="mRNA"/>
</dbReference>
<dbReference type="EMBL" id="BT044294">
    <property type="protein sequence ID" value="ACH92359.1"/>
    <property type="molecule type" value="mRNA"/>
</dbReference>
<dbReference type="RefSeq" id="NP_724578.1">
    <property type="nucleotide sequence ID" value="NM_165541.2"/>
</dbReference>
<dbReference type="PDB" id="3OFE">
    <property type="method" value="X-ray"/>
    <property type="resolution" value="2.29 A"/>
    <property type="chains" value="A/B=88-172"/>
</dbReference>
<dbReference type="PDB" id="3OFF">
    <property type="method" value="X-ray"/>
    <property type="resolution" value="2.00 A"/>
    <property type="chains" value="A=89-172"/>
</dbReference>
<dbReference type="PDBsum" id="3OFE"/>
<dbReference type="PDBsum" id="3OFF"/>
<dbReference type="SMR" id="Q8T9B6"/>
<dbReference type="BioGRID" id="71878">
    <property type="interactions" value="79"/>
</dbReference>
<dbReference type="DIP" id="DIP-59112N"/>
<dbReference type="ELM" id="Q8T9B6"/>
<dbReference type="FunCoup" id="Q8T9B6">
    <property type="interactions" value="2198"/>
</dbReference>
<dbReference type="IntAct" id="Q8T9B6">
    <property type="interactions" value="108"/>
</dbReference>
<dbReference type="STRING" id="7227.FBpp0088027"/>
<dbReference type="PaxDb" id="7227-FBpp0088027"/>
<dbReference type="DNASU" id="48986"/>
<dbReference type="EnsemblMetazoa" id="FBtr0088953">
    <property type="protein sequence ID" value="FBpp0088027"/>
    <property type="gene ID" value="FBgn0004132"/>
</dbReference>
<dbReference type="GeneID" id="48986"/>
<dbReference type="KEGG" id="dme:Dmel_CG30498"/>
<dbReference type="UCSC" id="CG30498-RA">
    <property type="organism name" value="d. melanogaster"/>
</dbReference>
<dbReference type="AGR" id="FB:FBgn0004132"/>
<dbReference type="CTD" id="48986"/>
<dbReference type="FlyBase" id="FBgn0004132">
    <property type="gene designation" value="boca"/>
</dbReference>
<dbReference type="VEuPathDB" id="VectorBase:FBgn0004132"/>
<dbReference type="eggNOG" id="KOG4357">
    <property type="taxonomic scope" value="Eukaryota"/>
</dbReference>
<dbReference type="GeneTree" id="ENSGT00390000000993"/>
<dbReference type="HOGENOM" id="CLU_111621_1_0_1"/>
<dbReference type="InParanoid" id="Q8T9B6"/>
<dbReference type="OMA" id="SQAWTAK"/>
<dbReference type="OrthoDB" id="75833at2759"/>
<dbReference type="PhylomeDB" id="Q8T9B6"/>
<dbReference type="BioGRID-ORCS" id="48986">
    <property type="hits" value="0 hits in 1 CRISPR screen"/>
</dbReference>
<dbReference type="EvolutionaryTrace" id="Q8T9B6"/>
<dbReference type="GenomeRNAi" id="48986"/>
<dbReference type="PRO" id="PR:Q8T9B6"/>
<dbReference type="Proteomes" id="UP000000803">
    <property type="component" value="Chromosome 2R"/>
</dbReference>
<dbReference type="Bgee" id="FBgn0004132">
    <property type="expression patterns" value="Expressed in distal medullary amacrine neuron Dm11 in insect head and 151 other cell types or tissues"/>
</dbReference>
<dbReference type="GO" id="GO:0045177">
    <property type="term" value="C:apical part of cell"/>
    <property type="evidence" value="ECO:0000314"/>
    <property type="project" value="FlyBase"/>
</dbReference>
<dbReference type="GO" id="GO:0005737">
    <property type="term" value="C:cytoplasm"/>
    <property type="evidence" value="ECO:0000314"/>
    <property type="project" value="FlyBase"/>
</dbReference>
<dbReference type="GO" id="GO:0012505">
    <property type="term" value="C:endomembrane system"/>
    <property type="evidence" value="ECO:0007005"/>
    <property type="project" value="FlyBase"/>
</dbReference>
<dbReference type="GO" id="GO:0005783">
    <property type="term" value="C:endoplasmic reticulum"/>
    <property type="evidence" value="ECO:0000314"/>
    <property type="project" value="FlyBase"/>
</dbReference>
<dbReference type="GO" id="GO:0005788">
    <property type="term" value="C:endoplasmic reticulum lumen"/>
    <property type="evidence" value="ECO:0000314"/>
    <property type="project" value="FlyBase"/>
</dbReference>
<dbReference type="GO" id="GO:0042802">
    <property type="term" value="F:identical protein binding"/>
    <property type="evidence" value="ECO:0000353"/>
    <property type="project" value="IntAct"/>
</dbReference>
<dbReference type="GO" id="GO:0006888">
    <property type="term" value="P:endoplasmic reticulum to Golgi vesicle-mediated transport"/>
    <property type="evidence" value="ECO:0000270"/>
    <property type="project" value="FlyBase"/>
</dbReference>
<dbReference type="GO" id="GO:0006457">
    <property type="term" value="P:protein folding"/>
    <property type="evidence" value="ECO:0000315"/>
    <property type="project" value="FlyBase"/>
</dbReference>
<dbReference type="GO" id="GO:0006612">
    <property type="term" value="P:protein targeting to membrane"/>
    <property type="evidence" value="ECO:0000315"/>
    <property type="project" value="FlyBase"/>
</dbReference>
<dbReference type="GO" id="GO:0016055">
    <property type="term" value="P:Wnt signaling pathway"/>
    <property type="evidence" value="ECO:0007669"/>
    <property type="project" value="UniProtKB-KW"/>
</dbReference>
<dbReference type="DisProt" id="DP02312"/>
<dbReference type="FunFam" id="3.30.70.260:FF:000031">
    <property type="entry name" value="LDLR chaperone MESD"/>
    <property type="match status" value="1"/>
</dbReference>
<dbReference type="Gene3D" id="3.30.70.260">
    <property type="match status" value="1"/>
</dbReference>
<dbReference type="Gene3D" id="6.10.250.640">
    <property type="match status" value="1"/>
</dbReference>
<dbReference type="InterPro" id="IPR019330">
    <property type="entry name" value="MESD"/>
</dbReference>
<dbReference type="PANTHER" id="PTHR17600:SF2">
    <property type="entry name" value="LRP CHAPERONE MESD"/>
    <property type="match status" value="1"/>
</dbReference>
<dbReference type="PANTHER" id="PTHR17600">
    <property type="entry name" value="MESODERM DEVELOPMENT CANDIDATE 2"/>
    <property type="match status" value="1"/>
</dbReference>
<dbReference type="Pfam" id="PF10185">
    <property type="entry name" value="Mesd"/>
    <property type="match status" value="1"/>
</dbReference>
<dbReference type="PROSITE" id="PS00014">
    <property type="entry name" value="ER_TARGET"/>
    <property type="match status" value="1"/>
</dbReference>
<reference key="1">
    <citation type="journal article" date="2000" name="Science">
        <title>The genome sequence of Drosophila melanogaster.</title>
        <authorList>
            <person name="Adams M.D."/>
            <person name="Celniker S.E."/>
            <person name="Holt R.A."/>
            <person name="Evans C.A."/>
            <person name="Gocayne J.D."/>
            <person name="Amanatides P.G."/>
            <person name="Scherer S.E."/>
            <person name="Li P.W."/>
            <person name="Hoskins R.A."/>
            <person name="Galle R.F."/>
            <person name="George R.A."/>
            <person name="Lewis S.E."/>
            <person name="Richards S."/>
            <person name="Ashburner M."/>
            <person name="Henderson S.N."/>
            <person name="Sutton G.G."/>
            <person name="Wortman J.R."/>
            <person name="Yandell M.D."/>
            <person name="Zhang Q."/>
            <person name="Chen L.X."/>
            <person name="Brandon R.C."/>
            <person name="Rogers Y.-H.C."/>
            <person name="Blazej R.G."/>
            <person name="Champe M."/>
            <person name="Pfeiffer B.D."/>
            <person name="Wan K.H."/>
            <person name="Doyle C."/>
            <person name="Baxter E.G."/>
            <person name="Helt G."/>
            <person name="Nelson C.R."/>
            <person name="Miklos G.L.G."/>
            <person name="Abril J.F."/>
            <person name="Agbayani A."/>
            <person name="An H.-J."/>
            <person name="Andrews-Pfannkoch C."/>
            <person name="Baldwin D."/>
            <person name="Ballew R.M."/>
            <person name="Basu A."/>
            <person name="Baxendale J."/>
            <person name="Bayraktaroglu L."/>
            <person name="Beasley E.M."/>
            <person name="Beeson K.Y."/>
            <person name="Benos P.V."/>
            <person name="Berman B.P."/>
            <person name="Bhandari D."/>
            <person name="Bolshakov S."/>
            <person name="Borkova D."/>
            <person name="Botchan M.R."/>
            <person name="Bouck J."/>
            <person name="Brokstein P."/>
            <person name="Brottier P."/>
            <person name="Burtis K.C."/>
            <person name="Busam D.A."/>
            <person name="Butler H."/>
            <person name="Cadieu E."/>
            <person name="Center A."/>
            <person name="Chandra I."/>
            <person name="Cherry J.M."/>
            <person name="Cawley S."/>
            <person name="Dahlke C."/>
            <person name="Davenport L.B."/>
            <person name="Davies P."/>
            <person name="de Pablos B."/>
            <person name="Delcher A."/>
            <person name="Deng Z."/>
            <person name="Mays A.D."/>
            <person name="Dew I."/>
            <person name="Dietz S.M."/>
            <person name="Dodson K."/>
            <person name="Doup L.E."/>
            <person name="Downes M."/>
            <person name="Dugan-Rocha S."/>
            <person name="Dunkov B.C."/>
            <person name="Dunn P."/>
            <person name="Durbin K.J."/>
            <person name="Evangelista C.C."/>
            <person name="Ferraz C."/>
            <person name="Ferriera S."/>
            <person name="Fleischmann W."/>
            <person name="Fosler C."/>
            <person name="Gabrielian A.E."/>
            <person name="Garg N.S."/>
            <person name="Gelbart W.M."/>
            <person name="Glasser K."/>
            <person name="Glodek A."/>
            <person name="Gong F."/>
            <person name="Gorrell J.H."/>
            <person name="Gu Z."/>
            <person name="Guan P."/>
            <person name="Harris M."/>
            <person name="Harris N.L."/>
            <person name="Harvey D.A."/>
            <person name="Heiman T.J."/>
            <person name="Hernandez J.R."/>
            <person name="Houck J."/>
            <person name="Hostin D."/>
            <person name="Houston K.A."/>
            <person name="Howland T.J."/>
            <person name="Wei M.-H."/>
            <person name="Ibegwam C."/>
            <person name="Jalali M."/>
            <person name="Kalush F."/>
            <person name="Karpen G.H."/>
            <person name="Ke Z."/>
            <person name="Kennison J.A."/>
            <person name="Ketchum K.A."/>
            <person name="Kimmel B.E."/>
            <person name="Kodira C.D."/>
            <person name="Kraft C.L."/>
            <person name="Kravitz S."/>
            <person name="Kulp D."/>
            <person name="Lai Z."/>
            <person name="Lasko P."/>
            <person name="Lei Y."/>
            <person name="Levitsky A.A."/>
            <person name="Li J.H."/>
            <person name="Li Z."/>
            <person name="Liang Y."/>
            <person name="Lin X."/>
            <person name="Liu X."/>
            <person name="Mattei B."/>
            <person name="McIntosh T.C."/>
            <person name="McLeod M.P."/>
            <person name="McPherson D."/>
            <person name="Merkulov G."/>
            <person name="Milshina N.V."/>
            <person name="Mobarry C."/>
            <person name="Morris J."/>
            <person name="Moshrefi A."/>
            <person name="Mount S.M."/>
            <person name="Moy M."/>
            <person name="Murphy B."/>
            <person name="Murphy L."/>
            <person name="Muzny D.M."/>
            <person name="Nelson D.L."/>
            <person name="Nelson D.R."/>
            <person name="Nelson K.A."/>
            <person name="Nixon K."/>
            <person name="Nusskern D.R."/>
            <person name="Pacleb J.M."/>
            <person name="Palazzolo M."/>
            <person name="Pittman G.S."/>
            <person name="Pan S."/>
            <person name="Pollard J."/>
            <person name="Puri V."/>
            <person name="Reese M.G."/>
            <person name="Reinert K."/>
            <person name="Remington K."/>
            <person name="Saunders R.D.C."/>
            <person name="Scheeler F."/>
            <person name="Shen H."/>
            <person name="Shue B.C."/>
            <person name="Siden-Kiamos I."/>
            <person name="Simpson M."/>
            <person name="Skupski M.P."/>
            <person name="Smith T.J."/>
            <person name="Spier E."/>
            <person name="Spradling A.C."/>
            <person name="Stapleton M."/>
            <person name="Strong R."/>
            <person name="Sun E."/>
            <person name="Svirskas R."/>
            <person name="Tector C."/>
            <person name="Turner R."/>
            <person name="Venter E."/>
            <person name="Wang A.H."/>
            <person name="Wang X."/>
            <person name="Wang Z.-Y."/>
            <person name="Wassarman D.A."/>
            <person name="Weinstock G.M."/>
            <person name="Weissenbach J."/>
            <person name="Williams S.M."/>
            <person name="Woodage T."/>
            <person name="Worley K.C."/>
            <person name="Wu D."/>
            <person name="Yang S."/>
            <person name="Yao Q.A."/>
            <person name="Ye J."/>
            <person name="Yeh R.-F."/>
            <person name="Zaveri J.S."/>
            <person name="Zhan M."/>
            <person name="Zhang G."/>
            <person name="Zhao Q."/>
            <person name="Zheng L."/>
            <person name="Zheng X.H."/>
            <person name="Zhong F.N."/>
            <person name="Zhong W."/>
            <person name="Zhou X."/>
            <person name="Zhu S.C."/>
            <person name="Zhu X."/>
            <person name="Smith H.O."/>
            <person name="Gibbs R.A."/>
            <person name="Myers E.W."/>
            <person name="Rubin G.M."/>
            <person name="Venter J.C."/>
        </authorList>
    </citation>
    <scope>NUCLEOTIDE SEQUENCE [LARGE SCALE GENOMIC DNA]</scope>
    <source>
        <strain>Berkeley</strain>
    </source>
</reference>
<reference key="2">
    <citation type="journal article" date="2002" name="Genome Biol.">
        <title>Annotation of the Drosophila melanogaster euchromatic genome: a systematic review.</title>
        <authorList>
            <person name="Misra S."/>
            <person name="Crosby M.A."/>
            <person name="Mungall C.J."/>
            <person name="Matthews B.B."/>
            <person name="Campbell K.S."/>
            <person name="Hradecky P."/>
            <person name="Huang Y."/>
            <person name="Kaminker J.S."/>
            <person name="Millburn G.H."/>
            <person name="Prochnik S.E."/>
            <person name="Smith C.D."/>
            <person name="Tupy J.L."/>
            <person name="Whitfield E.J."/>
            <person name="Bayraktaroglu L."/>
            <person name="Berman B.P."/>
            <person name="Bettencourt B.R."/>
            <person name="Celniker S.E."/>
            <person name="de Grey A.D.N.J."/>
            <person name="Drysdale R.A."/>
            <person name="Harris N.L."/>
            <person name="Richter J."/>
            <person name="Russo S."/>
            <person name="Schroeder A.J."/>
            <person name="Shu S.Q."/>
            <person name="Stapleton M."/>
            <person name="Yamada C."/>
            <person name="Ashburner M."/>
            <person name="Gelbart W.M."/>
            <person name="Rubin G.M."/>
            <person name="Lewis S.E."/>
        </authorList>
    </citation>
    <scope>GENOME REANNOTATION</scope>
    <source>
        <strain>Berkeley</strain>
    </source>
</reference>
<reference key="3">
    <citation type="submission" date="2003-03" db="EMBL/GenBank/DDBJ databases">
        <authorList>
            <person name="Stapleton M."/>
            <person name="Brokstein P."/>
            <person name="Hong L."/>
            <person name="Agbayani A."/>
            <person name="Carlson J.W."/>
            <person name="Champe M."/>
            <person name="Chavez C."/>
            <person name="Dorsett V."/>
            <person name="Dresnek D."/>
            <person name="Farfan D."/>
            <person name="Frise E."/>
            <person name="George R.A."/>
            <person name="Gonzalez M."/>
            <person name="Guarin H."/>
            <person name="Kronmiller B."/>
            <person name="Li P.W."/>
            <person name="Liao G."/>
            <person name="Miranda A."/>
            <person name="Mungall C.J."/>
            <person name="Nunoo J."/>
            <person name="Pacleb J.M."/>
            <person name="Paragas V."/>
            <person name="Park S."/>
            <person name="Patel S."/>
            <person name="Phouanenavong S."/>
            <person name="Wan K.H."/>
            <person name="Yu C."/>
            <person name="Lewis S.E."/>
            <person name="Rubin G.M."/>
            <person name="Celniker S.E."/>
        </authorList>
    </citation>
    <scope>NUCLEOTIDE SEQUENCE [LARGE SCALE MRNA]</scope>
    <source>
        <strain>Berkeley</strain>
        <tissue>Embryo</tissue>
    </source>
</reference>
<reference key="4">
    <citation type="journal article" date="2003" name="Cell">
        <title>Boca, an endoplasmic reticulum protein required for wingless signaling and trafficking of LDL receptor family members in Drosophila.</title>
        <authorList>
            <person name="Culi J."/>
            <person name="Mann R.S."/>
        </authorList>
    </citation>
    <scope>FUNCTION</scope>
    <scope>INTERACTION WITH ARROW AND YOLKLESS</scope>
    <scope>SUBCELLULAR LOCATION</scope>
    <scope>MUTAGENESIS OF TRP-49</scope>
</reference>
<protein>
    <recommendedName>
        <fullName>LDLR chaperone boca</fullName>
    </recommendedName>
</protein>
<keyword id="KW-0002">3D-structure</keyword>
<keyword id="KW-0143">Chaperone</keyword>
<keyword id="KW-0256">Endoplasmic reticulum</keyword>
<keyword id="KW-1185">Reference proteome</keyword>
<keyword id="KW-0732">Signal</keyword>
<keyword id="KW-0879">Wnt signaling pathway</keyword>
<comment type="function">
    <text evidence="5">Chaperone specifically assisting the folding of beta-propeller/EGF modules within the family of low-density lipoprotein receptors (LDLRs). Acts as a modulator of the Wg pathway, since some LDLRs are coreceptors for the canonical Wnt pathway.</text>
</comment>
<comment type="subunit">
    <text evidence="1 5">Monomer (By similarity). Interacts with Arrow and Yolkless.</text>
</comment>
<comment type="interaction">
    <interactant intactId="EBI-15914860">
        <id>Q8T9B6</id>
    </interactant>
    <interactant intactId="EBI-15914860">
        <id>Q8T9B6</id>
        <label>boca</label>
    </interactant>
    <organismsDiffer>false</organismsDiffer>
    <experiments>3</experiments>
</comment>
<comment type="subcellular location">
    <subcellularLocation>
        <location evidence="3 5">Endoplasmic reticulum</location>
    </subcellularLocation>
</comment>
<comment type="domain">
    <text evidence="1">The LDLR maturation activity resides in the N- and C-terminal unstructured regions.</text>
</comment>
<comment type="similarity">
    <text evidence="6">Belongs to the MESD family.</text>
</comment>